<dbReference type="EC" id="3.4.24.-"/>
<dbReference type="EMBL" id="AB078906">
    <property type="protein sequence ID" value="BAC55947.1"/>
    <property type="molecule type" value="mRNA"/>
</dbReference>
<dbReference type="SMR" id="Q805F4"/>
<dbReference type="MEROPS" id="M12.178"/>
<dbReference type="GO" id="GO:0005576">
    <property type="term" value="C:extracellular region"/>
    <property type="evidence" value="ECO:0007669"/>
    <property type="project" value="UniProtKB-SubCell"/>
</dbReference>
<dbReference type="GO" id="GO:0005886">
    <property type="term" value="C:plasma membrane"/>
    <property type="evidence" value="ECO:0007669"/>
    <property type="project" value="TreeGrafter"/>
</dbReference>
<dbReference type="GO" id="GO:0046872">
    <property type="term" value="F:metal ion binding"/>
    <property type="evidence" value="ECO:0007669"/>
    <property type="project" value="UniProtKB-KW"/>
</dbReference>
<dbReference type="GO" id="GO:0004222">
    <property type="term" value="F:metalloendopeptidase activity"/>
    <property type="evidence" value="ECO:0007669"/>
    <property type="project" value="InterPro"/>
</dbReference>
<dbReference type="GO" id="GO:0090729">
    <property type="term" value="F:toxin activity"/>
    <property type="evidence" value="ECO:0007669"/>
    <property type="project" value="UniProtKB-KW"/>
</dbReference>
<dbReference type="GO" id="GO:0006508">
    <property type="term" value="P:proteolysis"/>
    <property type="evidence" value="ECO:0007669"/>
    <property type="project" value="UniProtKB-KW"/>
</dbReference>
<dbReference type="CDD" id="cd04269">
    <property type="entry name" value="ZnMc_adamalysin_II_like"/>
    <property type="match status" value="1"/>
</dbReference>
<dbReference type="FunFam" id="3.40.390.10:FF:000002">
    <property type="entry name" value="Disintegrin and metalloproteinase domain-containing protein 22"/>
    <property type="match status" value="1"/>
</dbReference>
<dbReference type="FunFam" id="4.10.70.10:FF:000005">
    <property type="entry name" value="Zinc metalloproteinase/disintegrin"/>
    <property type="match status" value="1"/>
</dbReference>
<dbReference type="Gene3D" id="3.40.390.10">
    <property type="entry name" value="Collagenase (Catalytic Domain)"/>
    <property type="match status" value="1"/>
</dbReference>
<dbReference type="Gene3D" id="4.10.70.10">
    <property type="entry name" value="Disintegrin domain"/>
    <property type="match status" value="1"/>
</dbReference>
<dbReference type="InterPro" id="IPR001762">
    <property type="entry name" value="Disintegrin_dom"/>
</dbReference>
<dbReference type="InterPro" id="IPR036436">
    <property type="entry name" value="Disintegrin_dom_sf"/>
</dbReference>
<dbReference type="InterPro" id="IPR024079">
    <property type="entry name" value="MetalloPept_cat_dom_sf"/>
</dbReference>
<dbReference type="InterPro" id="IPR001590">
    <property type="entry name" value="Peptidase_M12B"/>
</dbReference>
<dbReference type="InterPro" id="IPR002870">
    <property type="entry name" value="Peptidase_M12B_N"/>
</dbReference>
<dbReference type="InterPro" id="IPR034027">
    <property type="entry name" value="Reprolysin_adamalysin"/>
</dbReference>
<dbReference type="PANTHER" id="PTHR11905">
    <property type="entry name" value="ADAM A DISINTEGRIN AND METALLOPROTEASE DOMAIN"/>
    <property type="match status" value="1"/>
</dbReference>
<dbReference type="PANTHER" id="PTHR11905:SF32">
    <property type="entry name" value="DISINTEGRIN AND METALLOPROTEINASE DOMAIN-CONTAINING PROTEIN 28"/>
    <property type="match status" value="1"/>
</dbReference>
<dbReference type="Pfam" id="PF00200">
    <property type="entry name" value="Disintegrin"/>
    <property type="match status" value="1"/>
</dbReference>
<dbReference type="Pfam" id="PF01562">
    <property type="entry name" value="Pep_M12B_propep"/>
    <property type="match status" value="1"/>
</dbReference>
<dbReference type="Pfam" id="PF01421">
    <property type="entry name" value="Reprolysin"/>
    <property type="match status" value="1"/>
</dbReference>
<dbReference type="PRINTS" id="PR00289">
    <property type="entry name" value="DISINTEGRIN"/>
</dbReference>
<dbReference type="SMART" id="SM00050">
    <property type="entry name" value="DISIN"/>
    <property type="match status" value="1"/>
</dbReference>
<dbReference type="SUPFAM" id="SSF57552">
    <property type="entry name" value="Blood coagulation inhibitor (disintegrin)"/>
    <property type="match status" value="1"/>
</dbReference>
<dbReference type="SUPFAM" id="SSF55486">
    <property type="entry name" value="Metalloproteases ('zincins'), catalytic domain"/>
    <property type="match status" value="1"/>
</dbReference>
<dbReference type="PROSITE" id="PS50215">
    <property type="entry name" value="ADAM_MEPRO"/>
    <property type="match status" value="1"/>
</dbReference>
<dbReference type="PROSITE" id="PS50214">
    <property type="entry name" value="DISINTEGRIN_2"/>
    <property type="match status" value="1"/>
</dbReference>
<dbReference type="PROSITE" id="PS00142">
    <property type="entry name" value="ZINC_PROTEASE"/>
    <property type="match status" value="1"/>
</dbReference>
<comment type="function">
    <molecule>Snake venom metalloproteinase</molecule>
    <text evidence="1">Impairs hemostasis in the envenomed animal.</text>
</comment>
<comment type="function">
    <molecule>Disintegrin piscivostatin-beta</molecule>
    <text evidence="6">Inhibits platelet aggregation induced by ADP. Acts by inhibiting fibrinogen interaction with platelet receptors GPIIb/GPIIIa (ITGA2B/ITGB3). Also inhibits platelet aggregate dissociation in human platelet-rich plasma.</text>
</comment>
<comment type="cofactor">
    <cofactor evidence="1">
        <name>Zn(2+)</name>
        <dbReference type="ChEBI" id="CHEBI:29105"/>
    </cofactor>
    <text evidence="1">Binds 1 zinc ion per subunit.</text>
</comment>
<comment type="subunit">
    <text evidence="7">Heterodimer with piscivostatin-alpha; disulfide-linked (disintegrin).</text>
</comment>
<comment type="subcellular location">
    <subcellularLocation>
        <location evidence="6">Secreted</location>
    </subcellularLocation>
</comment>
<comment type="tissue specificity">
    <text evidence="12">Expressed by the venom gland.</text>
</comment>
<comment type="miscellaneous">
    <text>The disintegrin belongs to the dimeric disintegrin subfamily.</text>
</comment>
<comment type="similarity">
    <text evidence="11">Belongs to the venom metalloproteinase (M12B) family. P-II subfamily. P-IIe sub-subfamily.</text>
</comment>
<keyword id="KW-0106">Calcium</keyword>
<keyword id="KW-1217">Cell adhesion impairing toxin</keyword>
<keyword id="KW-0903">Direct protein sequencing</keyword>
<keyword id="KW-1015">Disulfide bond</keyword>
<keyword id="KW-1199">Hemostasis impairing toxin</keyword>
<keyword id="KW-0378">Hydrolase</keyword>
<keyword id="KW-0479">Metal-binding</keyword>
<keyword id="KW-0482">Metalloprotease</keyword>
<keyword id="KW-1201">Platelet aggregation inhibiting toxin</keyword>
<keyword id="KW-0645">Protease</keyword>
<keyword id="KW-0964">Secreted</keyword>
<keyword id="KW-0732">Signal</keyword>
<keyword id="KW-0800">Toxin</keyword>
<keyword id="KW-0862">Zinc</keyword>
<keyword id="KW-0865">Zymogen</keyword>
<sequence length="483" mass="54073">MIQVLLVTLCLAAFPYQGNSIILESGNVNDYEVLYPQKVTALPKGAVQPKYEDTMQYEFKVNGEPVVLHLEKNKGLFSKDYSETHYSSDGRKITTNPPVEDHCYYHGRIQNDADSTASISACNGLKGHFKLQGETYLIEPLKLSDSEAHAVYKYENVEKEDEAPKMCGVTQTNWKSDKPIKKASQLNLTPEQQRFPQRYIELVVVADHRMFTKYNGNLNTIRIWVHELVNTMNVFYRPLNIHVSLTDLEVWSDQDLINVQPAAADTLEAFGDWRETVLLNRISHDNAQLLTAIELDGETIGLANRGTMCDPKLSTGIVQDHSAINLWVAVTMAHEMGHNLGISHDGNQCHCDANSCIMSEELRQQLSFEFSDCSQNQYQTFLTDHNPQCMLNEPLRTDIVSTPVSGNELWETGEESDFDAPANPCCDAATCKLTPGSQCAEGLCCDQCKFMKEGTVCHRAKGDDLDDYCNGISAGCPRNPFHA</sequence>
<proteinExistence type="evidence at protein level"/>
<feature type="signal peptide" evidence="3">
    <location>
        <begin position="1"/>
        <end position="20"/>
    </location>
</feature>
<feature type="propeptide" id="PRO_0000028969" evidence="1">
    <location>
        <begin position="21"/>
        <end position="191"/>
    </location>
</feature>
<feature type="chain" id="PRO_0000028970" description="Snake venom metalloproteinase">
    <location>
        <begin position="192"/>
        <end position="394"/>
    </location>
</feature>
<feature type="propeptide" id="PRO_0000028971" evidence="1">
    <location>
        <begin position="395"/>
        <end position="414"/>
    </location>
</feature>
<feature type="chain" id="PRO_0000028972" description="Disintegrin piscivostatin-beta" evidence="6">
    <location>
        <begin position="415"/>
        <end position="483"/>
    </location>
</feature>
<feature type="domain" description="Peptidase M12B" evidence="5">
    <location>
        <begin position="198"/>
        <end position="394"/>
    </location>
</feature>
<feature type="domain" description="Disintegrin" evidence="4">
    <location>
        <begin position="402"/>
        <end position="483"/>
    </location>
</feature>
<feature type="short sequence motif" description="Cell attachment site; atypical (KGD)">
    <location>
        <begin position="461"/>
        <end position="463"/>
    </location>
</feature>
<feature type="active site" evidence="5">
    <location>
        <position position="335"/>
    </location>
</feature>
<feature type="binding site" evidence="1">
    <location>
        <position position="201"/>
    </location>
    <ligand>
        <name>Ca(2+)</name>
        <dbReference type="ChEBI" id="CHEBI:29108"/>
    </ligand>
</feature>
<feature type="binding site" evidence="1">
    <location>
        <position position="285"/>
    </location>
    <ligand>
        <name>Ca(2+)</name>
        <dbReference type="ChEBI" id="CHEBI:29108"/>
    </ligand>
</feature>
<feature type="binding site">
    <location>
        <position position="334"/>
    </location>
    <ligand>
        <name>Zn(2+)</name>
        <dbReference type="ChEBI" id="CHEBI:29105"/>
        <note>catalytic</note>
    </ligand>
</feature>
<feature type="binding site">
    <location>
        <position position="338"/>
    </location>
    <ligand>
        <name>Zn(2+)</name>
        <dbReference type="ChEBI" id="CHEBI:29105"/>
        <note>catalytic</note>
    </ligand>
</feature>
<feature type="binding site">
    <location>
        <position position="344"/>
    </location>
    <ligand>
        <name>Zn(2+)</name>
        <dbReference type="ChEBI" id="CHEBI:29105"/>
        <note>catalytic</note>
    </ligand>
</feature>
<feature type="binding site" evidence="1">
    <location>
        <position position="389"/>
    </location>
    <ligand>
        <name>Ca(2+)</name>
        <dbReference type="ChEBI" id="CHEBI:29108"/>
    </ligand>
</feature>
<feature type="binding site" evidence="1">
    <location>
        <position position="392"/>
    </location>
    <ligand>
        <name>Ca(2+)</name>
        <dbReference type="ChEBI" id="CHEBI:29108"/>
    </ligand>
</feature>
<feature type="disulfide bond" evidence="5">
    <location>
        <begin position="309"/>
        <end position="389"/>
    </location>
</feature>
<feature type="disulfide bond" evidence="5">
    <location>
        <begin position="349"/>
        <end position="373"/>
    </location>
</feature>
<feature type="disulfide bond" evidence="5">
    <location>
        <begin position="351"/>
        <end position="356"/>
    </location>
</feature>
<feature type="disulfide bond" evidence="2">
    <location>
        <begin position="425"/>
        <end position="448"/>
    </location>
</feature>
<feature type="disulfide bond" description="Interchain (with C-54 in alpha subunit)" evidence="2">
    <location>
        <position position="426"/>
    </location>
</feature>
<feature type="disulfide bond" description="Interchain (with C-59 in alpha subunit)" evidence="2">
    <location>
        <position position="431"/>
    </location>
</feature>
<feature type="disulfide bond" evidence="2">
    <location>
        <begin position="439"/>
        <end position="445"/>
    </location>
</feature>
<feature type="disulfide bond" evidence="2">
    <location>
        <begin position="444"/>
        <end position="469"/>
    </location>
</feature>
<feature type="disulfide bond" evidence="2 4">
    <location>
        <begin position="457"/>
        <end position="476"/>
    </location>
</feature>
<organism evidence="13">
    <name type="scientific">Agkistrodon piscivorus piscivorus</name>
    <name type="common">Eastern cottonmouth</name>
    <dbReference type="NCBI Taxonomy" id="8716"/>
    <lineage>
        <taxon>Eukaryota</taxon>
        <taxon>Metazoa</taxon>
        <taxon>Chordata</taxon>
        <taxon>Craniata</taxon>
        <taxon>Vertebrata</taxon>
        <taxon>Euteleostomi</taxon>
        <taxon>Lepidosauria</taxon>
        <taxon>Squamata</taxon>
        <taxon>Bifurcata</taxon>
        <taxon>Unidentata</taxon>
        <taxon>Episquamata</taxon>
        <taxon>Toxicofera</taxon>
        <taxon>Serpentes</taxon>
        <taxon>Colubroidea</taxon>
        <taxon>Viperidae</taxon>
        <taxon>Crotalinae</taxon>
        <taxon>Agkistrodon</taxon>
    </lineage>
</organism>
<evidence type="ECO:0000250" key="1"/>
<evidence type="ECO:0000250" key="2">
    <source>
        <dbReference type="UniProtKB" id="Q805F6"/>
    </source>
</evidence>
<evidence type="ECO:0000255" key="3"/>
<evidence type="ECO:0000255" key="4">
    <source>
        <dbReference type="PROSITE-ProRule" id="PRU00068"/>
    </source>
</evidence>
<evidence type="ECO:0000255" key="5">
    <source>
        <dbReference type="PROSITE-ProRule" id="PRU00276"/>
    </source>
</evidence>
<evidence type="ECO:0000269" key="6">
    <source>
    </source>
</evidence>
<evidence type="ECO:0000269" key="7">
    <source>
    </source>
</evidence>
<evidence type="ECO:0000303" key="8">
    <source>
    </source>
</evidence>
<evidence type="ECO:0000303" key="9">
    <source>
    </source>
</evidence>
<evidence type="ECO:0000303" key="10">
    <source>
    </source>
</evidence>
<evidence type="ECO:0000305" key="11"/>
<evidence type="ECO:0000305" key="12">
    <source>
    </source>
</evidence>
<evidence type="ECO:0000312" key="13">
    <source>
        <dbReference type="EMBL" id="BAC55947.1"/>
    </source>
</evidence>
<name>VM2PB_AGKPI</name>
<reference key="1">
    <citation type="journal article" date="2002" name="Biochemistry">
        <title>A new gene structure of the disintegrin family: a subunit of dimeric disintegrin has a short coding region.</title>
        <authorList>
            <person name="Okuda D."/>
            <person name="Koike H."/>
            <person name="Morita T."/>
        </authorList>
    </citation>
    <scope>NUCLEOTIDE SEQUENCE [MRNA]</scope>
    <scope>SUBUNIT</scope>
    <source>
        <tissue>Venom gland</tissue>
    </source>
</reference>
<reference key="2">
    <citation type="journal article" date="2001" name="J. Biochem.">
        <title>Purification and characterization of a new RGD/KGD-containing dimeric disintegrin, piscivostatin, from the venom of Agkistrodon piscivorus piscivorus: the unique effect of piscivostatin on platelet aggregation.</title>
        <authorList>
            <person name="Okuda D."/>
            <person name="Morita T."/>
        </authorList>
    </citation>
    <scope>PROTEIN SEQUENCE OF 415-483</scope>
    <scope>FUNCTION OF PISCIVOSTATIN-BETA</scope>
    <scope>SUBCELLULAR LOCATION</scope>
    <source>
        <tissue>Venom</tissue>
    </source>
</reference>
<reference key="3">
    <citation type="journal article" date="2002" name="Acta Crystallogr. D">
        <title>Crystallization and preliminary crystallographic studies of dimeric disintegrins from the venom of two Agkistrodon snakes.</title>
        <authorList>
            <person name="Fujii Y."/>
            <person name="Okuda D."/>
            <person name="Fujimoto Z."/>
            <person name="Morita T."/>
            <person name="Mizuno H."/>
        </authorList>
    </citation>
    <scope>CRYSTALLIZATION</scope>
    <source>
        <tissue>Venom</tissue>
    </source>
</reference>
<protein>
    <recommendedName>
        <fullName>Zinc metalloproteinase/disintegrin</fullName>
    </recommendedName>
    <component>
        <recommendedName>
            <fullName>Snake venom metalloproteinase</fullName>
            <shortName>SVMP</shortName>
            <ecNumber>3.4.24.-</ecNumber>
        </recommendedName>
    </component>
    <component>
        <recommendedName>
            <fullName evidence="8 9 10">Disintegrin piscivostatin-beta</fullName>
            <shortName evidence="9">PVS-beta</shortName>
        </recommendedName>
    </component>
</protein>
<accession>Q805F4</accession>